<organism>
    <name type="scientific">Heterostelium pallidum (strain ATCC 26659 / Pp 5 / PN500)</name>
    <name type="common">Cellular slime mold</name>
    <name type="synonym">Polysphondylium pallidum</name>
    <dbReference type="NCBI Taxonomy" id="670386"/>
    <lineage>
        <taxon>Eukaryota</taxon>
        <taxon>Amoebozoa</taxon>
        <taxon>Evosea</taxon>
        <taxon>Eumycetozoa</taxon>
        <taxon>Dictyostelia</taxon>
        <taxon>Acytosteliales</taxon>
        <taxon>Acytosteliaceae</taxon>
        <taxon>Heterostelium</taxon>
    </lineage>
</organism>
<comment type="function">
    <text evidence="1">Positively regulates the activity of the minus-end directed microtubule motor protein dynein. May enhance dynein-mediated microtubule sliding by targeting dynein to the microtubule plus end. Required for several dynein- and microtubule-dependent processes.</text>
</comment>
<comment type="subcellular location">
    <subcellularLocation>
        <location evidence="1">Cytoplasm</location>
        <location evidence="1">Cytoskeleton</location>
    </subcellularLocation>
    <subcellularLocation>
        <location evidence="1">Cytoplasm</location>
        <location evidence="1">Cytoskeleton</location>
        <location evidence="1">Microtubule organizing center</location>
        <location evidence="1">Centrosome</location>
    </subcellularLocation>
    <text evidence="1">Localizes to the plus end of microtubules and to the centrosome.</text>
</comment>
<comment type="domain">
    <text evidence="1">Dimerization mediated by the LisH domain may be required to activate dynein.</text>
</comment>
<comment type="similarity">
    <text evidence="1">Belongs to the WD repeat LIS1/nudF family.</text>
</comment>
<feature type="chain" id="PRO_0000405056" description="Lissencephaly-1 homolog">
    <location>
        <begin position="1"/>
        <end position="417"/>
    </location>
</feature>
<feature type="domain" description="LisH" evidence="1">
    <location>
        <begin position="7"/>
        <end position="39"/>
    </location>
</feature>
<feature type="repeat" description="WD 1">
    <location>
        <begin position="102"/>
        <end position="143"/>
    </location>
</feature>
<feature type="repeat" description="WD 2">
    <location>
        <begin position="144"/>
        <end position="185"/>
    </location>
</feature>
<feature type="repeat" description="WD 3">
    <location>
        <begin position="186"/>
        <end position="225"/>
    </location>
</feature>
<feature type="repeat" description="WD 4">
    <location>
        <begin position="228"/>
        <end position="267"/>
    </location>
</feature>
<feature type="repeat" description="WD 5">
    <location>
        <begin position="270"/>
        <end position="339"/>
    </location>
</feature>
<feature type="repeat" description="WD 6">
    <location>
        <begin position="342"/>
        <end position="383"/>
    </location>
</feature>
<feature type="repeat" description="WD 7">
    <location>
        <begin position="385"/>
        <end position="417"/>
    </location>
</feature>
<feature type="region of interest" description="Disordered" evidence="2">
    <location>
        <begin position="72"/>
        <end position="93"/>
    </location>
</feature>
<feature type="coiled-coil region" evidence="1">
    <location>
        <begin position="52"/>
        <end position="80"/>
    </location>
</feature>
<gene>
    <name type="ORF">PPL_11852</name>
</gene>
<accession>D3BUN1</accession>
<proteinExistence type="inferred from homology"/>
<keyword id="KW-0131">Cell cycle</keyword>
<keyword id="KW-0132">Cell division</keyword>
<keyword id="KW-0175">Coiled coil</keyword>
<keyword id="KW-0963">Cytoplasm</keyword>
<keyword id="KW-0206">Cytoskeleton</keyword>
<keyword id="KW-0493">Microtubule</keyword>
<keyword id="KW-0498">Mitosis</keyword>
<keyword id="KW-1185">Reference proteome</keyword>
<keyword id="KW-0677">Repeat</keyword>
<keyword id="KW-0813">Transport</keyword>
<keyword id="KW-0853">WD repeat</keyword>
<reference key="1">
    <citation type="journal article" date="2011" name="Genome Res.">
        <title>Phylogeny-wide analysis of social amoeba genomes highlights ancient origins for complex intercellular communication.</title>
        <authorList>
            <person name="Heidel A.J."/>
            <person name="Lawal H.M."/>
            <person name="Felder M."/>
            <person name="Schilde C."/>
            <person name="Helps N.R."/>
            <person name="Tunggal B."/>
            <person name="Rivero F."/>
            <person name="John U."/>
            <person name="Schleicher M."/>
            <person name="Eichinger L."/>
            <person name="Platzer M."/>
            <person name="Noegel A.A."/>
            <person name="Schaap P."/>
            <person name="Gloeckner G."/>
        </authorList>
    </citation>
    <scope>NUCLEOTIDE SEQUENCE [LARGE SCALE GENOMIC DNA]</scope>
    <source>
        <strain>ATCC 26659 / Pp 5 / PN500</strain>
    </source>
</reference>
<evidence type="ECO:0000255" key="1">
    <source>
        <dbReference type="HAMAP-Rule" id="MF_03141"/>
    </source>
</evidence>
<evidence type="ECO:0000256" key="2">
    <source>
        <dbReference type="SAM" id="MobiDB-lite"/>
    </source>
</evidence>
<protein>
    <recommendedName>
        <fullName evidence="1">Lissencephaly-1 homolog</fullName>
    </recommendedName>
</protein>
<dbReference type="EMBL" id="ADBJ01000060">
    <property type="protein sequence ID" value="EFA74819.1"/>
    <property type="molecule type" value="Genomic_DNA"/>
</dbReference>
<dbReference type="SMR" id="D3BUN1"/>
<dbReference type="FunCoup" id="D3BUN1">
    <property type="interactions" value="403"/>
</dbReference>
<dbReference type="STRING" id="670386.D3BUN1"/>
<dbReference type="InParanoid" id="D3BUN1"/>
<dbReference type="OMA" id="WHVATKE"/>
<dbReference type="Proteomes" id="UP000001396">
    <property type="component" value="Unassembled WGS sequence"/>
</dbReference>
<dbReference type="GO" id="GO:0005813">
    <property type="term" value="C:centrosome"/>
    <property type="evidence" value="ECO:0007669"/>
    <property type="project" value="UniProtKB-SubCell"/>
</dbReference>
<dbReference type="GO" id="GO:0005737">
    <property type="term" value="C:cytoplasm"/>
    <property type="evidence" value="ECO:0007669"/>
    <property type="project" value="UniProtKB-UniRule"/>
</dbReference>
<dbReference type="GO" id="GO:0005874">
    <property type="term" value="C:microtubule"/>
    <property type="evidence" value="ECO:0007669"/>
    <property type="project" value="UniProtKB-KW"/>
</dbReference>
<dbReference type="GO" id="GO:0005875">
    <property type="term" value="C:microtubule associated complex"/>
    <property type="evidence" value="ECO:0007669"/>
    <property type="project" value="UniProtKB-UniRule"/>
</dbReference>
<dbReference type="GO" id="GO:0070840">
    <property type="term" value="F:dynein complex binding"/>
    <property type="evidence" value="ECO:0007669"/>
    <property type="project" value="UniProtKB-UniRule"/>
</dbReference>
<dbReference type="GO" id="GO:0051301">
    <property type="term" value="P:cell division"/>
    <property type="evidence" value="ECO:0007669"/>
    <property type="project" value="UniProtKB-KW"/>
</dbReference>
<dbReference type="GO" id="GO:0000132">
    <property type="term" value="P:establishment of mitotic spindle orientation"/>
    <property type="evidence" value="ECO:0007669"/>
    <property type="project" value="UniProtKB-UniRule"/>
</dbReference>
<dbReference type="GO" id="GO:0051012">
    <property type="term" value="P:microtubule sliding"/>
    <property type="evidence" value="ECO:0007669"/>
    <property type="project" value="UniProtKB-UniRule"/>
</dbReference>
<dbReference type="CDD" id="cd00200">
    <property type="entry name" value="WD40"/>
    <property type="match status" value="1"/>
</dbReference>
<dbReference type="FunFam" id="2.130.10.10:FF:000342">
    <property type="entry name" value="Nuclear distribution protein PAC1"/>
    <property type="match status" value="1"/>
</dbReference>
<dbReference type="FunFam" id="1.20.960.30:FF:000002">
    <property type="entry name" value="Platelet-activating factor acetylhydrolase ib"/>
    <property type="match status" value="1"/>
</dbReference>
<dbReference type="Gene3D" id="1.20.960.30">
    <property type="match status" value="1"/>
</dbReference>
<dbReference type="Gene3D" id="2.130.10.10">
    <property type="entry name" value="YVTN repeat-like/Quinoprotein amine dehydrogenase"/>
    <property type="match status" value="1"/>
</dbReference>
<dbReference type="HAMAP" id="MF_03141">
    <property type="entry name" value="lis1"/>
    <property type="match status" value="1"/>
</dbReference>
<dbReference type="InterPro" id="IPR017252">
    <property type="entry name" value="Dynein_regulator_LIS1"/>
</dbReference>
<dbReference type="InterPro" id="IPR020472">
    <property type="entry name" value="G-protein_beta_WD-40_rep"/>
</dbReference>
<dbReference type="InterPro" id="IPR037190">
    <property type="entry name" value="LIS1_N"/>
</dbReference>
<dbReference type="InterPro" id="IPR006594">
    <property type="entry name" value="LisH"/>
</dbReference>
<dbReference type="InterPro" id="IPR056795">
    <property type="entry name" value="PAC1-like_LisH-like_dom"/>
</dbReference>
<dbReference type="InterPro" id="IPR015943">
    <property type="entry name" value="WD40/YVTN_repeat-like_dom_sf"/>
</dbReference>
<dbReference type="InterPro" id="IPR019775">
    <property type="entry name" value="WD40_repeat_CS"/>
</dbReference>
<dbReference type="InterPro" id="IPR036322">
    <property type="entry name" value="WD40_repeat_dom_sf"/>
</dbReference>
<dbReference type="InterPro" id="IPR001680">
    <property type="entry name" value="WD40_rpt"/>
</dbReference>
<dbReference type="PANTHER" id="PTHR19879">
    <property type="entry name" value="TRANSCRIPTION INITIATION FACTOR TFIID"/>
    <property type="match status" value="1"/>
</dbReference>
<dbReference type="PANTHER" id="PTHR19879:SF9">
    <property type="entry name" value="TRANSCRIPTION INITIATION FACTOR TFIID SUBUNIT 5"/>
    <property type="match status" value="1"/>
</dbReference>
<dbReference type="Pfam" id="PF24951">
    <property type="entry name" value="LisH_PAC1"/>
    <property type="match status" value="1"/>
</dbReference>
<dbReference type="Pfam" id="PF00400">
    <property type="entry name" value="WD40"/>
    <property type="match status" value="7"/>
</dbReference>
<dbReference type="PIRSF" id="PIRSF037647">
    <property type="entry name" value="Dynein_regulator_Lis1"/>
    <property type="match status" value="1"/>
</dbReference>
<dbReference type="PRINTS" id="PR00320">
    <property type="entry name" value="GPROTEINBRPT"/>
</dbReference>
<dbReference type="SMART" id="SM00667">
    <property type="entry name" value="LisH"/>
    <property type="match status" value="1"/>
</dbReference>
<dbReference type="SMART" id="SM00320">
    <property type="entry name" value="WD40"/>
    <property type="match status" value="7"/>
</dbReference>
<dbReference type="SUPFAM" id="SSF109925">
    <property type="entry name" value="Lissencephaly-1 protein (Lis-1, PAF-AH alpha) N-terminal domain"/>
    <property type="match status" value="1"/>
</dbReference>
<dbReference type="SUPFAM" id="SSF50978">
    <property type="entry name" value="WD40 repeat-like"/>
    <property type="match status" value="1"/>
</dbReference>
<dbReference type="PROSITE" id="PS50896">
    <property type="entry name" value="LISH"/>
    <property type="match status" value="1"/>
</dbReference>
<dbReference type="PROSITE" id="PS00678">
    <property type="entry name" value="WD_REPEATS_1"/>
    <property type="match status" value="6"/>
</dbReference>
<dbReference type="PROSITE" id="PS50082">
    <property type="entry name" value="WD_REPEATS_2"/>
    <property type="match status" value="7"/>
</dbReference>
<dbReference type="PROSITE" id="PS50294">
    <property type="entry name" value="WD_REPEATS_REGION"/>
    <property type="match status" value="1"/>
</dbReference>
<sequence length="417" mass="46327">MVLTNKQKEELNGAILDYFDSSGYKLTSTEFTKETNIELDPKLKGLLEKKWTSVIRLQKKVMDLEAKVSQLEEELNNGGRGPARRGKEDALPRQPEKHVLTGHRNCINAVRFHPLFSVIVSASEDATMRIWDFDSGDFERTLKGHTNAVQDIDFDKSGNLLASCSADLTIKLWDFQSFDCIKTLHGHDHNVSCVRFLPSGDQLVSSSRDKSIKVWETATGYCTKTLTGHEDWVRKVIVSEDGTTLASCSNDQTARVWNLAKGECLLTFREHSHVVECLAYSPANIVEVPGSLLSTPEGKAKAKAGAGGTSFGQAGYLATGSRDKTIKIWELATGRCLQTYIGHDNWVRSIKFHPCGKYLISVGDDKSIRVWDIAQGRCIKTINEAHSHFISCLDFCSHNPHIATGGVDDIIKIWKLG</sequence>
<name>LIS1_HETP5</name>